<accession>P0A3L4</accession>
<accession>P05681</accession>
<proteinExistence type="predicted"/>
<keyword id="KW-0614">Plasmid</keyword>
<keyword id="KW-0814">Transposable element</keyword>
<feature type="chain" id="PRO_0000075516" description="Insertion element IS136 uncharacterized protein">
    <location>
        <begin position="1"/>
        <end position="195"/>
    </location>
</feature>
<feature type="domain" description="Integrase catalytic" evidence="1">
    <location>
        <begin position="25"/>
        <end position="194"/>
    </location>
</feature>
<evidence type="ECO:0000255" key="1">
    <source>
        <dbReference type="PROSITE-ProRule" id="PRU00457"/>
    </source>
</evidence>
<organism>
    <name type="scientific">Agrobacterium tumefaciens (strain T37)</name>
    <dbReference type="NCBI Taxonomy" id="176300"/>
    <lineage>
        <taxon>Bacteria</taxon>
        <taxon>Pseudomonadati</taxon>
        <taxon>Pseudomonadota</taxon>
        <taxon>Alphaproteobacteria</taxon>
        <taxon>Hyphomicrobiales</taxon>
        <taxon>Rhizobiaceae</taxon>
        <taxon>Rhizobium/Agrobacterium group</taxon>
        <taxon>Agrobacterium</taxon>
        <taxon>Agrobacterium tumefaciens complex</taxon>
    </lineage>
</organism>
<dbReference type="EMBL" id="X04282">
    <property type="protein sequence ID" value="CAA27831.1"/>
    <property type="molecule type" value="Genomic_DNA"/>
</dbReference>
<dbReference type="GO" id="GO:0003676">
    <property type="term" value="F:nucleic acid binding"/>
    <property type="evidence" value="ECO:0007669"/>
    <property type="project" value="InterPro"/>
</dbReference>
<dbReference type="GO" id="GO:0015074">
    <property type="term" value="P:DNA integration"/>
    <property type="evidence" value="ECO:0007669"/>
    <property type="project" value="InterPro"/>
</dbReference>
<dbReference type="Gene3D" id="3.30.420.10">
    <property type="entry name" value="Ribonuclease H-like superfamily/Ribonuclease H"/>
    <property type="match status" value="1"/>
</dbReference>
<dbReference type="InterPro" id="IPR001584">
    <property type="entry name" value="Integrase_cat-core"/>
</dbReference>
<dbReference type="InterPro" id="IPR012337">
    <property type="entry name" value="RNaseH-like_sf"/>
</dbReference>
<dbReference type="InterPro" id="IPR036397">
    <property type="entry name" value="RNaseH_sf"/>
</dbReference>
<dbReference type="InterPro" id="IPR050900">
    <property type="entry name" value="Transposase_IS3/IS150/IS904"/>
</dbReference>
<dbReference type="PANTHER" id="PTHR46889">
    <property type="entry name" value="TRANSPOSASE INSF FOR INSERTION SEQUENCE IS3B-RELATED"/>
    <property type="match status" value="1"/>
</dbReference>
<dbReference type="PANTHER" id="PTHR46889:SF4">
    <property type="entry name" value="TRANSPOSASE INSO FOR INSERTION SEQUENCE ELEMENT IS911B-RELATED"/>
    <property type="match status" value="1"/>
</dbReference>
<dbReference type="Pfam" id="PF00665">
    <property type="entry name" value="rve"/>
    <property type="match status" value="1"/>
</dbReference>
<dbReference type="SUPFAM" id="SSF53098">
    <property type="entry name" value="Ribonuclease H-like"/>
    <property type="match status" value="1"/>
</dbReference>
<dbReference type="PROSITE" id="PS50994">
    <property type="entry name" value="INTEGRASE"/>
    <property type="match status" value="1"/>
</dbReference>
<name>Y4601_AGRT7</name>
<reference key="1">
    <citation type="journal article" date="1986" name="Nucleic Acids Res.">
        <title>Nucleotide sequence of an insertion sequence (IS) element identified in the T-DNA region of a spontaneous variant of the Ti-plasmid pTiT37.</title>
        <authorList>
            <person name="Vanderleyden J."/>
            <person name="Desair J."/>
            <person name="de Meirsman C."/>
            <person name="Michiels K."/>
            <person name="van Gool A.P."/>
            <person name="Chilton M.-D."/>
            <person name="Jen G.C."/>
        </authorList>
    </citation>
    <scope>NUCLEOTIDE SEQUENCE [GENOMIC DNA]</scope>
    <source>
        <strain>A208</strain>
    </source>
</reference>
<protein>
    <recommendedName>
        <fullName>Insertion element IS136 uncharacterized protein</fullName>
    </recommendedName>
</protein>
<sequence length="195" mass="21864">MGNHAMLLEKHTAVRKGRLHDGKVMVMRSNLRWCSDGLEFACWNGEVIRLAFIIDAFDREIIAWTAVANAGISGSDVRDMMLEAVEKRFHATRAPHAIEHLSDNGSAYTARDTRLFAQALNLTPCFTPVASPQSNGMSEAFVKTLKRDYIRISALPDAQTALRLIDGWIEDYNEIHPHSALKMASPRQFIRAKSI</sequence>
<geneLocation type="plasmid">
    <name>pTiT37</name>
</geneLocation>